<reference key="1">
    <citation type="submission" date="2003-08" db="EMBL/GenBank/DDBJ databases">
        <title>Species determination utilizing Porphyra (Rhodophyta) plastid DNA RuBisCo sequences.</title>
        <authorList>
            <person name="Kito H."/>
            <person name="Kunimoto M."/>
            <person name="Mizukami Y."/>
            <person name="Murase N."/>
            <person name="Kuroki T."/>
            <person name="Taruta M."/>
            <person name="Levine I."/>
        </authorList>
    </citation>
    <scope>NUCLEOTIDE SEQUENCE [GENOMIC DNA]</scope>
    <source>
        <tissue>Thallus</tissue>
    </source>
</reference>
<comment type="function">
    <text evidence="1">RuBisCO catalyzes two reactions: the carboxylation of D-ribulose 1,5-bisphosphate, the primary event in carbon dioxide fixation, as well as the oxidative fragmentation of the pentose substrate in the photorespiration process. Both reactions occur simultaneously and in competition at the same active site. Although the small subunit is not catalytic it is essential for maximal activity.</text>
</comment>
<comment type="subunit">
    <text evidence="1">Heterohexadecamer of 8 large and 8 small subunits.</text>
</comment>
<comment type="subcellular location">
    <subcellularLocation>
        <location evidence="1">Plastid</location>
        <location evidence="1">Chloroplast</location>
    </subcellularLocation>
</comment>
<comment type="miscellaneous">
    <text>In this alga, in contrast to plants, the small subunit is encoded in the chloroplast.</text>
</comment>
<comment type="miscellaneous">
    <text evidence="1">The basic functional RuBisCO is composed of a large chain homodimer in a 'head-to-tail' conformation. In form I RuBisCO this homodimer is arranged in a barrel-like tetramer with the small subunits forming a tetrameric 'cap' on each end of the 'barrel'.</text>
</comment>
<comment type="similarity">
    <text evidence="1">Belongs to the RuBisCO small chain family.</text>
</comment>
<dbReference type="EMBL" id="AB118583">
    <property type="protein sequence ID" value="BAC84934.1"/>
    <property type="molecule type" value="Genomic_DNA"/>
</dbReference>
<dbReference type="SMR" id="Q760R8"/>
<dbReference type="GO" id="GO:0009507">
    <property type="term" value="C:chloroplast"/>
    <property type="evidence" value="ECO:0007669"/>
    <property type="project" value="UniProtKB-SubCell"/>
</dbReference>
<dbReference type="GO" id="GO:0016984">
    <property type="term" value="F:ribulose-bisphosphate carboxylase activity"/>
    <property type="evidence" value="ECO:0007669"/>
    <property type="project" value="UniProtKB-UniRule"/>
</dbReference>
<dbReference type="GO" id="GO:0019253">
    <property type="term" value="P:reductive pentose-phosphate cycle"/>
    <property type="evidence" value="ECO:0007669"/>
    <property type="project" value="UniProtKB-UniRule"/>
</dbReference>
<dbReference type="CDD" id="cd03527">
    <property type="entry name" value="RuBisCO_small"/>
    <property type="match status" value="1"/>
</dbReference>
<dbReference type="Gene3D" id="3.30.190.10">
    <property type="entry name" value="Ribulose bisphosphate carboxylase, small subunit"/>
    <property type="match status" value="1"/>
</dbReference>
<dbReference type="HAMAP" id="MF_00859">
    <property type="entry name" value="RuBisCO_S_bact"/>
    <property type="match status" value="1"/>
</dbReference>
<dbReference type="InterPro" id="IPR024681">
    <property type="entry name" value="RuBisCO_ssu"/>
</dbReference>
<dbReference type="InterPro" id="IPR000894">
    <property type="entry name" value="RuBisCO_ssu_dom"/>
</dbReference>
<dbReference type="InterPro" id="IPR036385">
    <property type="entry name" value="RuBisCO_ssu_sf"/>
</dbReference>
<dbReference type="PANTHER" id="PTHR31262">
    <property type="entry name" value="RIBULOSE BISPHOSPHATE CARBOXYLASE SMALL CHAIN 1, CHLOROPLASTIC"/>
    <property type="match status" value="1"/>
</dbReference>
<dbReference type="PANTHER" id="PTHR31262:SF23">
    <property type="entry name" value="RIBULOSE BISPHOSPHATE CARBOXYLASE SMALL SUBUNIT"/>
    <property type="match status" value="1"/>
</dbReference>
<dbReference type="Pfam" id="PF00101">
    <property type="entry name" value="RuBisCO_small"/>
    <property type="match status" value="1"/>
</dbReference>
<dbReference type="SMART" id="SM00961">
    <property type="entry name" value="RuBisCO_small"/>
    <property type="match status" value="1"/>
</dbReference>
<dbReference type="SUPFAM" id="SSF55239">
    <property type="entry name" value="RuBisCO, small subunit"/>
    <property type="match status" value="1"/>
</dbReference>
<sequence>MRLTQGAFSFLPDLTDEQINKQLAYIVSKGLSANVEYTDDPHPRNSYWELWGLPLFDVKDASAVMYEISSCRKAKPNYYVKVNAFDNTRGIESCVMSFIVNRPANEPGFLLQRQDFEGRTMKYSLHSYATEKPEGARY</sequence>
<proteinExistence type="inferred from homology"/>
<feature type="chain" id="PRO_0000277426" description="Ribulose bisphosphate carboxylase small subunit">
    <location>
        <begin position="1"/>
        <end position="138"/>
    </location>
</feature>
<keyword id="KW-0113">Calvin cycle</keyword>
<keyword id="KW-0120">Carbon dioxide fixation</keyword>
<keyword id="KW-0150">Chloroplast</keyword>
<keyword id="KW-0601">Photorespiration</keyword>
<keyword id="KW-0602">Photosynthesis</keyword>
<keyword id="KW-0934">Plastid</keyword>
<organism>
    <name type="scientific">Pyropia katadae</name>
    <name type="common">Red alga</name>
    <name type="synonym">Porphyra katadae</name>
    <dbReference type="NCBI Taxonomy" id="76161"/>
    <lineage>
        <taxon>Eukaryota</taxon>
        <taxon>Rhodophyta</taxon>
        <taxon>Bangiophyceae</taxon>
        <taxon>Bangiales</taxon>
        <taxon>Bangiaceae</taxon>
        <taxon>Pyropia</taxon>
    </lineage>
</organism>
<protein>
    <recommendedName>
        <fullName evidence="1">Ribulose bisphosphate carboxylase small subunit</fullName>
        <shortName evidence="1">RuBisCO small subunit</shortName>
    </recommendedName>
</protein>
<name>RBS_PYRKA</name>
<geneLocation type="chloroplast"/>
<gene>
    <name evidence="1" type="primary">rbcS</name>
</gene>
<evidence type="ECO:0000255" key="1">
    <source>
        <dbReference type="HAMAP-Rule" id="MF_00859"/>
    </source>
</evidence>
<accession>Q760R8</accession>